<proteinExistence type="inferred from homology"/>
<evidence type="ECO:0000255" key="1">
    <source>
        <dbReference type="PROSITE-ProRule" id="PRU01182"/>
    </source>
</evidence>
<evidence type="ECO:0000305" key="2"/>
<dbReference type="EMBL" id="AP008230">
    <property type="protein sequence ID" value="BAE84969.1"/>
    <property type="molecule type" value="Genomic_DNA"/>
</dbReference>
<dbReference type="SMR" id="Q24SM3"/>
<dbReference type="STRING" id="138119.DSY3180"/>
<dbReference type="KEGG" id="dsy:DSY3180"/>
<dbReference type="eggNOG" id="COG2003">
    <property type="taxonomic scope" value="Bacteria"/>
</dbReference>
<dbReference type="HOGENOM" id="CLU_073529_0_2_9"/>
<dbReference type="Proteomes" id="UP000001946">
    <property type="component" value="Chromosome"/>
</dbReference>
<dbReference type="GO" id="GO:0046872">
    <property type="term" value="F:metal ion binding"/>
    <property type="evidence" value="ECO:0007669"/>
    <property type="project" value="UniProtKB-KW"/>
</dbReference>
<dbReference type="GO" id="GO:0008237">
    <property type="term" value="F:metallopeptidase activity"/>
    <property type="evidence" value="ECO:0007669"/>
    <property type="project" value="UniProtKB-KW"/>
</dbReference>
<dbReference type="GO" id="GO:0006508">
    <property type="term" value="P:proteolysis"/>
    <property type="evidence" value="ECO:0007669"/>
    <property type="project" value="UniProtKB-KW"/>
</dbReference>
<dbReference type="CDD" id="cd08071">
    <property type="entry name" value="MPN_DUF2466"/>
    <property type="match status" value="1"/>
</dbReference>
<dbReference type="Gene3D" id="3.40.140.10">
    <property type="entry name" value="Cytidine Deaminase, domain 2"/>
    <property type="match status" value="1"/>
</dbReference>
<dbReference type="InterPro" id="IPR037518">
    <property type="entry name" value="MPN"/>
</dbReference>
<dbReference type="InterPro" id="IPR025657">
    <property type="entry name" value="RadC_JAB"/>
</dbReference>
<dbReference type="InterPro" id="IPR010994">
    <property type="entry name" value="RuvA_2-like"/>
</dbReference>
<dbReference type="InterPro" id="IPR001405">
    <property type="entry name" value="UPF0758"/>
</dbReference>
<dbReference type="InterPro" id="IPR020891">
    <property type="entry name" value="UPF0758_CS"/>
</dbReference>
<dbReference type="InterPro" id="IPR046778">
    <property type="entry name" value="UPF0758_N"/>
</dbReference>
<dbReference type="NCBIfam" id="NF000642">
    <property type="entry name" value="PRK00024.1"/>
    <property type="match status" value="1"/>
</dbReference>
<dbReference type="NCBIfam" id="TIGR00608">
    <property type="entry name" value="radc"/>
    <property type="match status" value="1"/>
</dbReference>
<dbReference type="PANTHER" id="PTHR30471">
    <property type="entry name" value="DNA REPAIR PROTEIN RADC"/>
    <property type="match status" value="1"/>
</dbReference>
<dbReference type="PANTHER" id="PTHR30471:SF3">
    <property type="entry name" value="UPF0758 PROTEIN YEES-RELATED"/>
    <property type="match status" value="1"/>
</dbReference>
<dbReference type="Pfam" id="PF04002">
    <property type="entry name" value="RadC"/>
    <property type="match status" value="1"/>
</dbReference>
<dbReference type="Pfam" id="PF20582">
    <property type="entry name" value="UPF0758_N"/>
    <property type="match status" value="1"/>
</dbReference>
<dbReference type="SUPFAM" id="SSF102712">
    <property type="entry name" value="JAB1/MPN domain"/>
    <property type="match status" value="1"/>
</dbReference>
<dbReference type="SUPFAM" id="SSF47781">
    <property type="entry name" value="RuvA domain 2-like"/>
    <property type="match status" value="1"/>
</dbReference>
<dbReference type="PROSITE" id="PS50249">
    <property type="entry name" value="MPN"/>
    <property type="match status" value="1"/>
</dbReference>
<dbReference type="PROSITE" id="PS01302">
    <property type="entry name" value="UPF0758"/>
    <property type="match status" value="1"/>
</dbReference>
<gene>
    <name type="ordered locus">DSY3180</name>
</gene>
<reference key="1">
    <citation type="journal article" date="2006" name="J. Bacteriol.">
        <title>Complete genome sequence of the dehalorespiring bacterium Desulfitobacterium hafniense Y51 and comparison with Dehalococcoides ethenogenes 195.</title>
        <authorList>
            <person name="Nonaka H."/>
            <person name="Keresztes G."/>
            <person name="Shinoda Y."/>
            <person name="Ikenaga Y."/>
            <person name="Abe M."/>
            <person name="Naito K."/>
            <person name="Inatomi K."/>
            <person name="Furukawa K."/>
            <person name="Inui M."/>
            <person name="Yukawa H."/>
        </authorList>
    </citation>
    <scope>NUCLEOTIDE SEQUENCE [LARGE SCALE GENOMIC DNA]</scope>
    <source>
        <strain>Y51</strain>
    </source>
</reference>
<protein>
    <recommendedName>
        <fullName>UPF0758 protein DSY3180</fullName>
    </recommendedName>
</protein>
<organism>
    <name type="scientific">Desulfitobacterium hafniense (strain Y51)</name>
    <dbReference type="NCBI Taxonomy" id="138119"/>
    <lineage>
        <taxon>Bacteria</taxon>
        <taxon>Bacillati</taxon>
        <taxon>Bacillota</taxon>
        <taxon>Clostridia</taxon>
        <taxon>Eubacteriales</taxon>
        <taxon>Desulfitobacteriaceae</taxon>
        <taxon>Desulfitobacterium</taxon>
    </lineage>
</organism>
<sequence>MDYRRLKDLPEELLPRERLFQYGADALSNREILAILLRTGVKGENVLDFSERLLTETGGLSGLARLTVHELTRYRGMGTAKAAELKAALELGRRSVSSDPLVRPVINSPQDIAHLVMEEMRYLDREHFRVVSLSTKNHVLGISSISVGSLNSSLVHPRECFKEAIRRNSNAIILLHNHPSGDPTPSSEDIDVTRRLSDGGQILGIEVLDHVIIGDNRYISLKERGIL</sequence>
<feature type="chain" id="PRO_0000322684" description="UPF0758 protein DSY3180">
    <location>
        <begin position="1"/>
        <end position="227"/>
    </location>
</feature>
<feature type="domain" description="MPN" evidence="1">
    <location>
        <begin position="105"/>
        <end position="227"/>
    </location>
</feature>
<feature type="short sequence motif" description="JAMM motif" evidence="1">
    <location>
        <begin position="176"/>
        <end position="189"/>
    </location>
</feature>
<feature type="binding site" evidence="1">
    <location>
        <position position="176"/>
    </location>
    <ligand>
        <name>Zn(2+)</name>
        <dbReference type="ChEBI" id="CHEBI:29105"/>
        <note>catalytic</note>
    </ligand>
</feature>
<feature type="binding site" evidence="1">
    <location>
        <position position="178"/>
    </location>
    <ligand>
        <name>Zn(2+)</name>
        <dbReference type="ChEBI" id="CHEBI:29105"/>
        <note>catalytic</note>
    </ligand>
</feature>
<feature type="binding site" evidence="1">
    <location>
        <position position="189"/>
    </location>
    <ligand>
        <name>Zn(2+)</name>
        <dbReference type="ChEBI" id="CHEBI:29105"/>
        <note>catalytic</note>
    </ligand>
</feature>
<accession>Q24SM3</accession>
<name>Y3180_DESHY</name>
<comment type="similarity">
    <text evidence="2">Belongs to the UPF0758 family.</text>
</comment>
<keyword id="KW-0378">Hydrolase</keyword>
<keyword id="KW-0479">Metal-binding</keyword>
<keyword id="KW-0482">Metalloprotease</keyword>
<keyword id="KW-0645">Protease</keyword>
<keyword id="KW-1185">Reference proteome</keyword>
<keyword id="KW-0862">Zinc</keyword>